<protein>
    <recommendedName>
        <fullName>Signal transducer and activator of transcription 5B</fullName>
    </recommendedName>
</protein>
<feature type="chain" id="PRO_0000182432" description="Signal transducer and activator of transcription 5B">
    <location>
        <begin position="1"/>
        <end position="786"/>
    </location>
</feature>
<feature type="domain" description="SH2" evidence="5">
    <location>
        <begin position="589"/>
        <end position="686"/>
    </location>
</feature>
<feature type="modified residue" description="Phosphotyrosine" evidence="4">
    <location>
        <position position="90"/>
    </location>
</feature>
<feature type="modified residue" description="Phosphoserine" evidence="7">
    <location>
        <position position="128"/>
    </location>
</feature>
<feature type="modified residue" description="Phosphotyrosine" evidence="2">
    <location>
        <position position="682"/>
    </location>
</feature>
<feature type="modified residue" description="Phosphotyrosine" evidence="7">
    <location>
        <position position="699"/>
    </location>
</feature>
<feature type="sequence conflict" description="In Ref. 2; CAA66141." evidence="6" ref="2">
    <original>L</original>
    <variation>A</variation>
    <location>
        <position position="296"/>
    </location>
</feature>
<feature type="sequence conflict" description="In Ref. 2; CAA66141." evidence="6" ref="2">
    <original>S</original>
    <variation>V</variation>
    <location>
        <position position="328"/>
    </location>
</feature>
<feature type="sequence conflict" description="In Ref. 2; CAA66141." evidence="6" ref="2">
    <original>R</original>
    <variation>A</variation>
    <location>
        <position position="489"/>
    </location>
</feature>
<feature type="sequence conflict" description="In Ref. 2; CAA66141." evidence="6" ref="2">
    <original>R</original>
    <variation>P</variation>
    <location>
        <position position="690"/>
    </location>
</feature>
<feature type="sequence conflict" description="In Ref. 2; CAA66141." evidence="6" ref="2">
    <original>T</original>
    <variation>A</variation>
    <location>
        <position position="716"/>
    </location>
</feature>
<accession>P52632</accession>
<proteinExistence type="evidence at protein level"/>
<gene>
    <name type="primary">Stat5b</name>
</gene>
<reference key="1">
    <citation type="journal article" date="1995" name="J. Biol. Chem.">
        <title>Transcription factors Stat3 and Stat5b are present in rat liver nuclei late in an acute phase response and bind interleukin-6 response elements.</title>
        <authorList>
            <person name="Ripperger J.A."/>
            <person name="Fritz S."/>
            <person name="Richter K."/>
            <person name="Hocke G.M."/>
            <person name="Lottspeich F."/>
            <person name="Fey G.H."/>
        </authorList>
    </citation>
    <scope>NUCLEOTIDE SEQUENCE [MRNA]</scope>
    <source>
        <tissue>Liver</tissue>
    </source>
</reference>
<reference key="2">
    <citation type="submission" date="1996-04" db="EMBL/GenBank/DDBJ databases">
        <authorList>
            <person name="Luo G."/>
            <person name="Yu-Lee L."/>
        </authorList>
    </citation>
    <scope>NUCLEOTIDE SEQUENCE [MRNA]</scope>
    <source>
        <strain>Noble</strain>
        <tissue>Lymph node</tissue>
    </source>
</reference>
<reference key="3">
    <citation type="journal article" date="2012" name="Nat. Commun.">
        <title>Quantitative maps of protein phosphorylation sites across 14 different rat organs and tissues.</title>
        <authorList>
            <person name="Lundby A."/>
            <person name="Secher A."/>
            <person name="Lage K."/>
            <person name="Nordsborg N.B."/>
            <person name="Dmytriyev A."/>
            <person name="Lundby C."/>
            <person name="Olsen J.V."/>
        </authorList>
    </citation>
    <scope>PHOSPHORYLATION [LARGE SCALE ANALYSIS] AT SER-128 AND TYR-699</scope>
    <scope>IDENTIFICATION BY MASS SPECTROMETRY [LARGE SCALE ANALYSIS]</scope>
</reference>
<comment type="function">
    <text evidence="4">Carries out a dual function: signal transduction and activation of transcription. Mediates cellular responses to the cytokine KITLG/SCF and other growth factors. Binds to the GAS element and activates PRL-induced transcription. Positively regulates hematopoietic/erythroid differentiation.</text>
</comment>
<comment type="subunit">
    <text evidence="3 4">Upon activation, forms a homodimer or a heterodimer with a related family member. Binds NR3C1. Interacts with NCOA1. Interacts with NMI. Interacts with SOCS7. Interacts (via SH2 domain) with INSR. Interacts with CPEB3; this inhibits STAT5B-mediated transcriptional activation.</text>
</comment>
<comment type="subcellular location">
    <subcellularLocation>
        <location evidence="3">Cytoplasm</location>
    </subcellularLocation>
    <subcellularLocation>
        <location evidence="3">Nucleus</location>
    </subcellularLocation>
    <text evidence="1">Translocated into the nucleus in response to phosphorylation.</text>
</comment>
<comment type="PTM">
    <text evidence="4">Tyrosine phosphorylated in response to signaling via activated KIT, resulting in translocation to the nucleus. Tyrosine phosphorylated in response to signaling via activated FLT3; wild-type FLT3 results in much weaker phosphorylation than constitutively activated mutant FLT3. Alternatively, can be phosphorylated by JAK2. Phosphorylation at Tyr-699 by PTK6 or HCK leads to an increase of its transcriptional activity.</text>
</comment>
<comment type="similarity">
    <text evidence="6">Belongs to the transcription factor STAT family.</text>
</comment>
<name>STA5B_RAT</name>
<organism>
    <name type="scientific">Rattus norvegicus</name>
    <name type="common">Rat</name>
    <dbReference type="NCBI Taxonomy" id="10116"/>
    <lineage>
        <taxon>Eukaryota</taxon>
        <taxon>Metazoa</taxon>
        <taxon>Chordata</taxon>
        <taxon>Craniata</taxon>
        <taxon>Vertebrata</taxon>
        <taxon>Euteleostomi</taxon>
        <taxon>Mammalia</taxon>
        <taxon>Eutheria</taxon>
        <taxon>Euarchontoglires</taxon>
        <taxon>Glires</taxon>
        <taxon>Rodentia</taxon>
        <taxon>Myomorpha</taxon>
        <taxon>Muroidea</taxon>
        <taxon>Muridae</taxon>
        <taxon>Murinae</taxon>
        <taxon>Rattus</taxon>
    </lineage>
</organism>
<dbReference type="EMBL" id="X91988">
    <property type="protein sequence ID" value="CAA63043.1"/>
    <property type="status" value="ALT_TERM"/>
    <property type="molecule type" value="mRNA"/>
</dbReference>
<dbReference type="EMBL" id="X91988">
    <property type="protein sequence ID" value="CAA63042.1"/>
    <property type="molecule type" value="mRNA"/>
</dbReference>
<dbReference type="EMBL" id="X97541">
    <property type="protein sequence ID" value="CAA66141.1"/>
    <property type="molecule type" value="mRNA"/>
</dbReference>
<dbReference type="RefSeq" id="NP_071775.1">
    <property type="nucleotide sequence ID" value="NM_022380.1"/>
</dbReference>
<dbReference type="SMR" id="P52632"/>
<dbReference type="DIP" id="DIP-60986N"/>
<dbReference type="FunCoup" id="P52632">
    <property type="interactions" value="2344"/>
</dbReference>
<dbReference type="IntAct" id="P52632">
    <property type="interactions" value="3"/>
</dbReference>
<dbReference type="STRING" id="10116.ENSRNOP00000026354"/>
<dbReference type="iPTMnet" id="P52632"/>
<dbReference type="PhosphoSitePlus" id="P52632"/>
<dbReference type="jPOST" id="P52632"/>
<dbReference type="PaxDb" id="10116-ENSRNOP00000026354"/>
<dbReference type="GeneID" id="25126"/>
<dbReference type="KEGG" id="rno:25126"/>
<dbReference type="UCSC" id="RGD:3774">
    <property type="organism name" value="rat"/>
</dbReference>
<dbReference type="AGR" id="RGD:3774"/>
<dbReference type="CTD" id="6777"/>
<dbReference type="RGD" id="3774">
    <property type="gene designation" value="Stat5b"/>
</dbReference>
<dbReference type="eggNOG" id="KOG3667">
    <property type="taxonomic scope" value="Eukaryota"/>
</dbReference>
<dbReference type="InParanoid" id="P52632"/>
<dbReference type="PhylomeDB" id="P52632"/>
<dbReference type="TreeFam" id="TF318648"/>
<dbReference type="Reactome" id="R-RNO-1266695">
    <property type="pathway name" value="Interleukin-7 signaling"/>
</dbReference>
<dbReference type="Reactome" id="R-RNO-1433557">
    <property type="pathway name" value="Signaling by SCF-KIT"/>
</dbReference>
<dbReference type="Reactome" id="R-RNO-186763">
    <property type="pathway name" value="Downstream signal transduction"/>
</dbReference>
<dbReference type="Reactome" id="R-RNO-512988">
    <property type="pathway name" value="Interleukin-3, Interleukin-5 and GM-CSF signaling"/>
</dbReference>
<dbReference type="Reactome" id="R-RNO-8854691">
    <property type="pathway name" value="Interleukin-20 family signaling"/>
</dbReference>
<dbReference type="Reactome" id="R-RNO-8983432">
    <property type="pathway name" value="Interleukin-15 signaling"/>
</dbReference>
<dbReference type="Reactome" id="R-RNO-8985947">
    <property type="pathway name" value="Interleukin-9 signaling"/>
</dbReference>
<dbReference type="Reactome" id="R-RNO-9020558">
    <property type="pathway name" value="Interleukin-2 signaling"/>
</dbReference>
<dbReference type="Reactome" id="R-RNO-9020958">
    <property type="pathway name" value="Interleukin-21 signaling"/>
</dbReference>
<dbReference type="Reactome" id="R-RNO-982772">
    <property type="pathway name" value="Growth hormone receptor signaling"/>
</dbReference>
<dbReference type="PRO" id="PR:P52632"/>
<dbReference type="Proteomes" id="UP000002494">
    <property type="component" value="Unplaced"/>
</dbReference>
<dbReference type="GO" id="GO:0005737">
    <property type="term" value="C:cytoplasm"/>
    <property type="evidence" value="ECO:0000250"/>
    <property type="project" value="UniProtKB"/>
</dbReference>
<dbReference type="GO" id="GO:0005829">
    <property type="term" value="C:cytosol"/>
    <property type="evidence" value="ECO:0000304"/>
    <property type="project" value="Reactome"/>
</dbReference>
<dbReference type="GO" id="GO:0005634">
    <property type="term" value="C:nucleus"/>
    <property type="evidence" value="ECO:0000266"/>
    <property type="project" value="RGD"/>
</dbReference>
<dbReference type="GO" id="GO:0090575">
    <property type="term" value="C:RNA polymerase II transcription regulator complex"/>
    <property type="evidence" value="ECO:0000318"/>
    <property type="project" value="GO_Central"/>
</dbReference>
<dbReference type="GO" id="GO:0003682">
    <property type="term" value="F:chromatin binding"/>
    <property type="evidence" value="ECO:0000314"/>
    <property type="project" value="UniProtKB"/>
</dbReference>
<dbReference type="GO" id="GO:0003677">
    <property type="term" value="F:DNA binding"/>
    <property type="evidence" value="ECO:0000314"/>
    <property type="project" value="RGD"/>
</dbReference>
<dbReference type="GO" id="GO:0001228">
    <property type="term" value="F:DNA-binding transcription activator activity, RNA polymerase II-specific"/>
    <property type="evidence" value="ECO:0000250"/>
    <property type="project" value="UniProtKB"/>
</dbReference>
<dbReference type="GO" id="GO:0003700">
    <property type="term" value="F:DNA-binding transcription factor activity"/>
    <property type="evidence" value="ECO:0000314"/>
    <property type="project" value="RGD"/>
</dbReference>
<dbReference type="GO" id="GO:0000981">
    <property type="term" value="F:DNA-binding transcription factor activity, RNA polymerase II-specific"/>
    <property type="evidence" value="ECO:0000318"/>
    <property type="project" value="GO_Central"/>
</dbReference>
<dbReference type="GO" id="GO:0140297">
    <property type="term" value="F:DNA-binding transcription factor binding"/>
    <property type="evidence" value="ECO:0000353"/>
    <property type="project" value="RGD"/>
</dbReference>
<dbReference type="GO" id="GO:0003690">
    <property type="term" value="F:double-stranded DNA binding"/>
    <property type="evidence" value="ECO:0000314"/>
    <property type="project" value="RGD"/>
</dbReference>
<dbReference type="GO" id="GO:0042802">
    <property type="term" value="F:identical protein binding"/>
    <property type="evidence" value="ECO:0000266"/>
    <property type="project" value="RGD"/>
</dbReference>
<dbReference type="GO" id="GO:0035259">
    <property type="term" value="F:nuclear glucocorticoid receptor binding"/>
    <property type="evidence" value="ECO:0000266"/>
    <property type="project" value="RGD"/>
</dbReference>
<dbReference type="GO" id="GO:0046983">
    <property type="term" value="F:protein dimerization activity"/>
    <property type="evidence" value="ECO:0000250"/>
    <property type="project" value="UniProtKB"/>
</dbReference>
<dbReference type="GO" id="GO:0042803">
    <property type="term" value="F:protein homodimerization activity"/>
    <property type="evidence" value="ECO:0000250"/>
    <property type="project" value="UniProtKB"/>
</dbReference>
<dbReference type="GO" id="GO:0000978">
    <property type="term" value="F:RNA polymerase II cis-regulatory region sequence-specific DNA binding"/>
    <property type="evidence" value="ECO:0000266"/>
    <property type="project" value="RGD"/>
</dbReference>
<dbReference type="GO" id="GO:0043565">
    <property type="term" value="F:sequence-specific DNA binding"/>
    <property type="evidence" value="ECO:0000314"/>
    <property type="project" value="RGD"/>
</dbReference>
<dbReference type="GO" id="GO:0050798">
    <property type="term" value="P:activated T cell proliferation"/>
    <property type="evidence" value="ECO:0000266"/>
    <property type="project" value="RGD"/>
</dbReference>
<dbReference type="GO" id="GO:0006953">
    <property type="term" value="P:acute-phase response"/>
    <property type="evidence" value="ECO:0000314"/>
    <property type="project" value="RGD"/>
</dbReference>
<dbReference type="GO" id="GO:0030183">
    <property type="term" value="P:B cell differentiation"/>
    <property type="evidence" value="ECO:0000266"/>
    <property type="project" value="RGD"/>
</dbReference>
<dbReference type="GO" id="GO:0008283">
    <property type="term" value="P:cell population proliferation"/>
    <property type="evidence" value="ECO:0000266"/>
    <property type="project" value="RGD"/>
</dbReference>
<dbReference type="GO" id="GO:0007259">
    <property type="term" value="P:cell surface receptor signaling pathway via JAK-STAT"/>
    <property type="evidence" value="ECO:0000314"/>
    <property type="project" value="RGD"/>
</dbReference>
<dbReference type="GO" id="GO:0071364">
    <property type="term" value="P:cellular response to epidermal growth factor stimulus"/>
    <property type="evidence" value="ECO:0000314"/>
    <property type="project" value="UniProtKB"/>
</dbReference>
<dbReference type="GO" id="GO:0071363">
    <property type="term" value="P:cellular response to growth factor stimulus"/>
    <property type="evidence" value="ECO:0000250"/>
    <property type="project" value="UniProtKB"/>
</dbReference>
<dbReference type="GO" id="GO:0032870">
    <property type="term" value="P:cellular response to hormone stimulus"/>
    <property type="evidence" value="ECO:0000266"/>
    <property type="project" value="RGD"/>
</dbReference>
<dbReference type="GO" id="GO:0019221">
    <property type="term" value="P:cytokine-mediated signaling pathway"/>
    <property type="evidence" value="ECO:0000266"/>
    <property type="project" value="RGD"/>
</dbReference>
<dbReference type="GO" id="GO:0006952">
    <property type="term" value="P:defense response"/>
    <property type="evidence" value="ECO:0000318"/>
    <property type="project" value="GO_Central"/>
</dbReference>
<dbReference type="GO" id="GO:0046543">
    <property type="term" value="P:development of secondary female sexual characteristics"/>
    <property type="evidence" value="ECO:0000266"/>
    <property type="project" value="RGD"/>
</dbReference>
<dbReference type="GO" id="GO:0046544">
    <property type="term" value="P:development of secondary male sexual characteristics"/>
    <property type="evidence" value="ECO:0000266"/>
    <property type="project" value="RGD"/>
</dbReference>
<dbReference type="GO" id="GO:0030218">
    <property type="term" value="P:erythrocyte differentiation"/>
    <property type="evidence" value="ECO:0000266"/>
    <property type="project" value="RGD"/>
</dbReference>
<dbReference type="GO" id="GO:0038162">
    <property type="term" value="P:erythropoietin-mediated signaling pathway"/>
    <property type="evidence" value="ECO:0000266"/>
    <property type="project" value="RGD"/>
</dbReference>
<dbReference type="GO" id="GO:0007565">
    <property type="term" value="P:female pregnancy"/>
    <property type="evidence" value="ECO:0000266"/>
    <property type="project" value="RGD"/>
</dbReference>
<dbReference type="GO" id="GO:0042492">
    <property type="term" value="P:gamma-delta T cell differentiation"/>
    <property type="evidence" value="ECO:0000266"/>
    <property type="project" value="RGD"/>
</dbReference>
<dbReference type="GO" id="GO:0060397">
    <property type="term" value="P:growth hormone receptor signaling pathway via JAK-STAT"/>
    <property type="evidence" value="ECO:0000266"/>
    <property type="project" value="RGD"/>
</dbReference>
<dbReference type="GO" id="GO:0007595">
    <property type="term" value="P:lactation"/>
    <property type="evidence" value="ECO:0000266"/>
    <property type="project" value="RGD"/>
</dbReference>
<dbReference type="GO" id="GO:0019915">
    <property type="term" value="P:lipid storage"/>
    <property type="evidence" value="ECO:0000266"/>
    <property type="project" value="RGD"/>
</dbReference>
<dbReference type="GO" id="GO:0001889">
    <property type="term" value="P:liver development"/>
    <property type="evidence" value="ECO:0000314"/>
    <property type="project" value="RGD"/>
</dbReference>
<dbReference type="GO" id="GO:0001553">
    <property type="term" value="P:luteinization"/>
    <property type="evidence" value="ECO:0000314"/>
    <property type="project" value="RGD"/>
</dbReference>
<dbReference type="GO" id="GO:0030098">
    <property type="term" value="P:lymphocyte differentiation"/>
    <property type="evidence" value="ECO:0000266"/>
    <property type="project" value="RGD"/>
</dbReference>
<dbReference type="GO" id="GO:0097531">
    <property type="term" value="P:mast cell migration"/>
    <property type="evidence" value="ECO:0000266"/>
    <property type="project" value="RGD"/>
</dbReference>
<dbReference type="GO" id="GO:0000278">
    <property type="term" value="P:mitotic cell cycle"/>
    <property type="evidence" value="ECO:0000266"/>
    <property type="project" value="RGD"/>
</dbReference>
<dbReference type="GO" id="GO:0033028">
    <property type="term" value="P:myeloid cell apoptotic process"/>
    <property type="evidence" value="ECO:0000266"/>
    <property type="project" value="RGD"/>
</dbReference>
<dbReference type="GO" id="GO:0001779">
    <property type="term" value="P:natural killer cell differentiation"/>
    <property type="evidence" value="ECO:0000266"/>
    <property type="project" value="RGD"/>
</dbReference>
<dbReference type="GO" id="GO:0042267">
    <property type="term" value="P:natural killer cell mediated cytotoxicity"/>
    <property type="evidence" value="ECO:0000266"/>
    <property type="project" value="RGD"/>
</dbReference>
<dbReference type="GO" id="GO:0001787">
    <property type="term" value="P:natural killer cell proliferation"/>
    <property type="evidence" value="ECO:0000266"/>
    <property type="project" value="RGD"/>
</dbReference>
<dbReference type="GO" id="GO:0045647">
    <property type="term" value="P:negative regulation of erythrocyte differentiation"/>
    <property type="evidence" value="ECO:0000266"/>
    <property type="project" value="RGD"/>
</dbReference>
<dbReference type="GO" id="GO:0033033">
    <property type="term" value="P:negative regulation of myeloid cell apoptotic process"/>
    <property type="evidence" value="ECO:0000266"/>
    <property type="project" value="RGD"/>
</dbReference>
<dbReference type="GO" id="GO:0048541">
    <property type="term" value="P:Peyer's patch development"/>
    <property type="evidence" value="ECO:0000266"/>
    <property type="project" value="RGD"/>
</dbReference>
<dbReference type="GO" id="GO:0042104">
    <property type="term" value="P:positive regulation of activated T cell proliferation"/>
    <property type="evidence" value="ECO:0000266"/>
    <property type="project" value="RGD"/>
</dbReference>
<dbReference type="GO" id="GO:0045579">
    <property type="term" value="P:positive regulation of B cell differentiation"/>
    <property type="evidence" value="ECO:0000266"/>
    <property type="project" value="RGD"/>
</dbReference>
<dbReference type="GO" id="GO:0008284">
    <property type="term" value="P:positive regulation of cell population proliferation"/>
    <property type="evidence" value="ECO:0000266"/>
    <property type="project" value="RGD"/>
</dbReference>
<dbReference type="GO" id="GO:0045648">
    <property type="term" value="P:positive regulation of erythrocyte differentiation"/>
    <property type="evidence" value="ECO:0000250"/>
    <property type="project" value="UniProtKB"/>
</dbReference>
<dbReference type="GO" id="GO:0090271">
    <property type="term" value="P:positive regulation of fibroblast growth factor production"/>
    <property type="evidence" value="ECO:0000315"/>
    <property type="project" value="RGD"/>
</dbReference>
<dbReference type="GO" id="GO:0045588">
    <property type="term" value="P:positive regulation of gamma-delta T cell differentiation"/>
    <property type="evidence" value="ECO:0000266"/>
    <property type="project" value="RGD"/>
</dbReference>
<dbReference type="GO" id="GO:0010628">
    <property type="term" value="P:positive regulation of gene expression"/>
    <property type="evidence" value="ECO:0000315"/>
    <property type="project" value="RGD"/>
</dbReference>
<dbReference type="GO" id="GO:0050729">
    <property type="term" value="P:positive regulation of inflammatory response"/>
    <property type="evidence" value="ECO:0000266"/>
    <property type="project" value="RGD"/>
</dbReference>
<dbReference type="GO" id="GO:0032743">
    <property type="term" value="P:positive regulation of interleukin-2 production"/>
    <property type="evidence" value="ECO:0000266"/>
    <property type="project" value="RGD"/>
</dbReference>
<dbReference type="GO" id="GO:0045621">
    <property type="term" value="P:positive regulation of lymphocyte differentiation"/>
    <property type="evidence" value="ECO:0000266"/>
    <property type="project" value="RGD"/>
</dbReference>
<dbReference type="GO" id="GO:0045931">
    <property type="term" value="P:positive regulation of mitotic cell cycle"/>
    <property type="evidence" value="ECO:0000266"/>
    <property type="project" value="RGD"/>
</dbReference>
<dbReference type="GO" id="GO:0040018">
    <property type="term" value="P:positive regulation of multicellular organism growth"/>
    <property type="evidence" value="ECO:0000266"/>
    <property type="project" value="RGD"/>
</dbReference>
<dbReference type="GO" id="GO:0032825">
    <property type="term" value="P:positive regulation of natural killer cell differentiation"/>
    <property type="evidence" value="ECO:0000266"/>
    <property type="project" value="RGD"/>
</dbReference>
<dbReference type="GO" id="GO:0045954">
    <property type="term" value="P:positive regulation of natural killer cell mediated cytotoxicity"/>
    <property type="evidence" value="ECO:0000266"/>
    <property type="project" value="RGD"/>
</dbReference>
<dbReference type="GO" id="GO:0032819">
    <property type="term" value="P:positive regulation of natural killer cell proliferation"/>
    <property type="evidence" value="ECO:0000266"/>
    <property type="project" value="RGD"/>
</dbReference>
<dbReference type="GO" id="GO:0014911">
    <property type="term" value="P:positive regulation of smooth muscle cell migration"/>
    <property type="evidence" value="ECO:0000315"/>
    <property type="project" value="RGD"/>
</dbReference>
<dbReference type="GO" id="GO:0048661">
    <property type="term" value="P:positive regulation of smooth muscle cell proliferation"/>
    <property type="evidence" value="ECO:0000315"/>
    <property type="project" value="RGD"/>
</dbReference>
<dbReference type="GO" id="GO:0045944">
    <property type="term" value="P:positive regulation of transcription by RNA polymerase II"/>
    <property type="evidence" value="ECO:0000250"/>
    <property type="project" value="UniProtKB"/>
</dbReference>
<dbReference type="GO" id="GO:0042448">
    <property type="term" value="P:progesterone metabolic process"/>
    <property type="evidence" value="ECO:0000266"/>
    <property type="project" value="RGD"/>
</dbReference>
<dbReference type="GO" id="GO:0030155">
    <property type="term" value="P:regulation of cell adhesion"/>
    <property type="evidence" value="ECO:0000266"/>
    <property type="project" value="RGD"/>
</dbReference>
<dbReference type="GO" id="GO:0042127">
    <property type="term" value="P:regulation of cell population proliferation"/>
    <property type="evidence" value="ECO:0000318"/>
    <property type="project" value="GO_Central"/>
</dbReference>
<dbReference type="GO" id="GO:0006355">
    <property type="term" value="P:regulation of DNA-templated transcription"/>
    <property type="evidence" value="ECO:0000314"/>
    <property type="project" value="RGD"/>
</dbReference>
<dbReference type="GO" id="GO:0030856">
    <property type="term" value="P:regulation of epithelial cell differentiation"/>
    <property type="evidence" value="ECO:0000266"/>
    <property type="project" value="RGD"/>
</dbReference>
<dbReference type="GO" id="GO:0040014">
    <property type="term" value="P:regulation of multicellular organism growth"/>
    <property type="evidence" value="ECO:0000266"/>
    <property type="project" value="RGD"/>
</dbReference>
<dbReference type="GO" id="GO:0019218">
    <property type="term" value="P:regulation of steroid metabolic process"/>
    <property type="evidence" value="ECO:0000266"/>
    <property type="project" value="RGD"/>
</dbReference>
<dbReference type="GO" id="GO:0006357">
    <property type="term" value="P:regulation of transcription by RNA polymerase II"/>
    <property type="evidence" value="ECO:0000266"/>
    <property type="project" value="RGD"/>
</dbReference>
<dbReference type="GO" id="GO:0032355">
    <property type="term" value="P:response to estradiol"/>
    <property type="evidence" value="ECO:0000266"/>
    <property type="project" value="RGD"/>
</dbReference>
<dbReference type="GO" id="GO:0045471">
    <property type="term" value="P:response to ethanol"/>
    <property type="evidence" value="ECO:0000270"/>
    <property type="project" value="RGD"/>
</dbReference>
<dbReference type="GO" id="GO:0001666">
    <property type="term" value="P:response to hypoxia"/>
    <property type="evidence" value="ECO:0000270"/>
    <property type="project" value="RGD"/>
</dbReference>
<dbReference type="GO" id="GO:0070672">
    <property type="term" value="P:response to interleukin-15"/>
    <property type="evidence" value="ECO:0000266"/>
    <property type="project" value="RGD"/>
</dbReference>
<dbReference type="GO" id="GO:0070669">
    <property type="term" value="P:response to interleukin-2"/>
    <property type="evidence" value="ECO:0000266"/>
    <property type="project" value="RGD"/>
</dbReference>
<dbReference type="GO" id="GO:0070670">
    <property type="term" value="P:response to interleukin-4"/>
    <property type="evidence" value="ECO:0000266"/>
    <property type="project" value="RGD"/>
</dbReference>
<dbReference type="GO" id="GO:0032496">
    <property type="term" value="P:response to lipopolysaccharide"/>
    <property type="evidence" value="ECO:0000314"/>
    <property type="project" value="RGD"/>
</dbReference>
<dbReference type="GO" id="GO:0043434">
    <property type="term" value="P:response to peptide hormone"/>
    <property type="evidence" value="ECO:0000314"/>
    <property type="project" value="RGD"/>
</dbReference>
<dbReference type="GO" id="GO:0007548">
    <property type="term" value="P:sex differentiation"/>
    <property type="evidence" value="ECO:0000266"/>
    <property type="project" value="RGD"/>
</dbReference>
<dbReference type="GO" id="GO:0033077">
    <property type="term" value="P:T cell differentiation in thymus"/>
    <property type="evidence" value="ECO:0000266"/>
    <property type="project" value="RGD"/>
</dbReference>
<dbReference type="GO" id="GO:0043029">
    <property type="term" value="P:T cell homeostasis"/>
    <property type="evidence" value="ECO:0000266"/>
    <property type="project" value="RGD"/>
</dbReference>
<dbReference type="GO" id="GO:0019530">
    <property type="term" value="P:taurine metabolic process"/>
    <property type="evidence" value="ECO:0000266"/>
    <property type="project" value="RGD"/>
</dbReference>
<dbReference type="GO" id="GO:0006366">
    <property type="term" value="P:transcription by RNA polymerase II"/>
    <property type="evidence" value="ECO:0000314"/>
    <property type="project" value="RGD"/>
</dbReference>
<dbReference type="CDD" id="cd10420">
    <property type="entry name" value="SH2_STAT5b"/>
    <property type="match status" value="1"/>
</dbReference>
<dbReference type="CDD" id="cd16855">
    <property type="entry name" value="STAT5_CCD"/>
    <property type="match status" value="1"/>
</dbReference>
<dbReference type="CDD" id="cd16849">
    <property type="entry name" value="STAT5_DBD"/>
    <property type="match status" value="1"/>
</dbReference>
<dbReference type="FunFam" id="1.10.532.10:FF:000002">
    <property type="entry name" value="Signal transducer and activator of transcription"/>
    <property type="match status" value="1"/>
</dbReference>
<dbReference type="FunFam" id="1.20.1050.20:FF:000002">
    <property type="entry name" value="Signal transducer and activator of transcription"/>
    <property type="match status" value="1"/>
</dbReference>
<dbReference type="FunFam" id="2.60.40.630:FF:000002">
    <property type="entry name" value="Signal transducer and activator of transcription"/>
    <property type="match status" value="1"/>
</dbReference>
<dbReference type="FunFam" id="3.30.505.10:FF:000025">
    <property type="entry name" value="Signal transducer and activator of transcription"/>
    <property type="match status" value="1"/>
</dbReference>
<dbReference type="FunFam" id="1.10.238.10:FF:000029">
    <property type="entry name" value="Signal transducer and transcription activator 6"/>
    <property type="match status" value="1"/>
</dbReference>
<dbReference type="Gene3D" id="1.10.238.10">
    <property type="entry name" value="EF-hand"/>
    <property type="match status" value="1"/>
</dbReference>
<dbReference type="Gene3D" id="3.30.505.10">
    <property type="entry name" value="SH2 domain"/>
    <property type="match status" value="1"/>
</dbReference>
<dbReference type="Gene3D" id="1.20.1050.20">
    <property type="entry name" value="STAT transcription factor, all-alpha domain"/>
    <property type="match status" value="1"/>
</dbReference>
<dbReference type="Gene3D" id="2.60.40.630">
    <property type="entry name" value="STAT transcription factor, DNA-binding domain"/>
    <property type="match status" value="1"/>
</dbReference>
<dbReference type="Gene3D" id="1.10.532.10">
    <property type="entry name" value="STAT transcription factor, N-terminal domain"/>
    <property type="match status" value="1"/>
</dbReference>
<dbReference type="InterPro" id="IPR008967">
    <property type="entry name" value="p53-like_TF_DNA-bd_sf"/>
</dbReference>
<dbReference type="InterPro" id="IPR000980">
    <property type="entry name" value="SH2"/>
</dbReference>
<dbReference type="InterPro" id="IPR036860">
    <property type="entry name" value="SH2_dom_sf"/>
</dbReference>
<dbReference type="InterPro" id="IPR001217">
    <property type="entry name" value="STAT"/>
</dbReference>
<dbReference type="InterPro" id="IPR046994">
    <property type="entry name" value="STAT5_CCD"/>
</dbReference>
<dbReference type="InterPro" id="IPR035858">
    <property type="entry name" value="STAT5a/5b_DBD"/>
</dbReference>
<dbReference type="InterPro" id="IPR035886">
    <property type="entry name" value="STAT5b_SH2"/>
</dbReference>
<dbReference type="InterPro" id="IPR048988">
    <property type="entry name" value="STAT_linker"/>
</dbReference>
<dbReference type="InterPro" id="IPR036535">
    <property type="entry name" value="STAT_N_sf"/>
</dbReference>
<dbReference type="InterPro" id="IPR013800">
    <property type="entry name" value="STAT_TF_alpha"/>
</dbReference>
<dbReference type="InterPro" id="IPR015988">
    <property type="entry name" value="STAT_TF_coiled-coil"/>
</dbReference>
<dbReference type="InterPro" id="IPR013801">
    <property type="entry name" value="STAT_TF_DNA-bd"/>
</dbReference>
<dbReference type="InterPro" id="IPR012345">
    <property type="entry name" value="STAT_TF_DNA-bd_N"/>
</dbReference>
<dbReference type="InterPro" id="IPR013799">
    <property type="entry name" value="STAT_TF_prot_interaction"/>
</dbReference>
<dbReference type="PANTHER" id="PTHR11801">
    <property type="entry name" value="SIGNAL TRANSDUCER AND ACTIVATOR OF TRANSCRIPTION"/>
    <property type="match status" value="1"/>
</dbReference>
<dbReference type="Pfam" id="PF00017">
    <property type="entry name" value="SH2"/>
    <property type="match status" value="1"/>
</dbReference>
<dbReference type="Pfam" id="PF01017">
    <property type="entry name" value="STAT_alpha"/>
    <property type="match status" value="1"/>
</dbReference>
<dbReference type="Pfam" id="PF02864">
    <property type="entry name" value="STAT_bind"/>
    <property type="match status" value="1"/>
</dbReference>
<dbReference type="Pfam" id="PF02865">
    <property type="entry name" value="STAT_int"/>
    <property type="match status" value="1"/>
</dbReference>
<dbReference type="Pfam" id="PF21354">
    <property type="entry name" value="STAT_linker"/>
    <property type="match status" value="1"/>
</dbReference>
<dbReference type="SMART" id="SM00252">
    <property type="entry name" value="SH2"/>
    <property type="match status" value="1"/>
</dbReference>
<dbReference type="SMART" id="SM00964">
    <property type="entry name" value="STAT_int"/>
    <property type="match status" value="1"/>
</dbReference>
<dbReference type="SUPFAM" id="SSF49417">
    <property type="entry name" value="p53-like transcription factors"/>
    <property type="match status" value="1"/>
</dbReference>
<dbReference type="SUPFAM" id="SSF55550">
    <property type="entry name" value="SH2 domain"/>
    <property type="match status" value="1"/>
</dbReference>
<dbReference type="SUPFAM" id="SSF47655">
    <property type="entry name" value="STAT"/>
    <property type="match status" value="1"/>
</dbReference>
<dbReference type="SUPFAM" id="SSF48092">
    <property type="entry name" value="Transcription factor STAT-4 N-domain"/>
    <property type="match status" value="1"/>
</dbReference>
<dbReference type="PROSITE" id="PS50001">
    <property type="entry name" value="SH2"/>
    <property type="match status" value="1"/>
</dbReference>
<sequence>MAMWIQAQQLQGDALHQMQALYGQHFPIEVRHYLSQWIESQAWDSIDLDNPQENIKATQLLEGLVQELQKKAEHQVGEDGFLLKIKLGHYATQLQNTYDRCPMELVRCIRHILYNEQRLVREANNGSSPAGSLADAMSQKHLQINQTFEELRLITQDTESELKKLQQTQEYFIIQYQESLRIQAQFAQLAQLNPQERMSRETALQQKQVSLETWLQREAQTLQQYRVELAEKHQKTLQLLRKQQTIILDDELIQWKRRQQLAGNGGPPEGSLDVLQSWCEKLAEIIWQNRQQIRRLEHLCQQLPIPGPVEEMLAEVNATITDIISALSTSTFIIEKQPPQVLKTQTKFAATVRLLVGGKLNVHMNPPQVKATIISEQQAKSLLKNENTRNDYSGEILNNCCVMEYHQATGTLSAHFRNMSLKRIKRSDRRGAESVTEEKFTILFDSQFSVGGNELVFQVKTLSLPVVVIVHGSQDNNATATVLWDNAFREPGRVPFAVPDKVLWPQLCEALNMKFKAEVQSNRGLTKENLVFLAQKLFNSSSNHLEDYNSMSVSWSQFNRENLPGRNYTFWQWFDGVMEVLKKHLKPHWNDGAILGFVNKQQAHDLLINKPDGTFLLRFSDSEIGGITIAWKFDSQERMFWNLMPFTTRDFSIRSLADRLGDLNYLIYVFPDRPKDEVYSKYYTPVPCERATAKAADGYVKPQIKQVVPEFVNASTDAGSGATYMDQAPSPVVCPQAHYNMYPQNPDSVLDTDGDFDLEDTMDVARRVEELLGRPMDSQWIPHAQS</sequence>
<evidence type="ECO:0000250" key="1"/>
<evidence type="ECO:0000250" key="2">
    <source>
        <dbReference type="UniProtKB" id="P42229"/>
    </source>
</evidence>
<evidence type="ECO:0000250" key="3">
    <source>
        <dbReference type="UniProtKB" id="P42232"/>
    </source>
</evidence>
<evidence type="ECO:0000250" key="4">
    <source>
        <dbReference type="UniProtKB" id="P51692"/>
    </source>
</evidence>
<evidence type="ECO:0000255" key="5">
    <source>
        <dbReference type="PROSITE-ProRule" id="PRU00191"/>
    </source>
</evidence>
<evidence type="ECO:0000305" key="6"/>
<evidence type="ECO:0007744" key="7">
    <source>
    </source>
</evidence>
<keyword id="KW-0010">Activator</keyword>
<keyword id="KW-0963">Cytoplasm</keyword>
<keyword id="KW-0238">DNA-binding</keyword>
<keyword id="KW-0539">Nucleus</keyword>
<keyword id="KW-0597">Phosphoprotein</keyword>
<keyword id="KW-1185">Reference proteome</keyword>
<keyword id="KW-0727">SH2 domain</keyword>
<keyword id="KW-0804">Transcription</keyword>
<keyword id="KW-0805">Transcription regulation</keyword>